<comment type="function">
    <text>Dispensable for transformability. Not known if it can act as a pyrroline-5-carboxylate reductase.</text>
</comment>
<comment type="similarity">
    <text evidence="1">Belongs to the pyrroline-5-carboxylate reductase family.</text>
</comment>
<comment type="sequence caution" evidence="1">
    <conflict type="erroneous initiation">
        <sequence resource="EMBL-CDS" id="AAC36904"/>
    </conflict>
</comment>
<keyword id="KW-1185">Reference proteome</keyword>
<feature type="chain" id="PRO_0000187330" description="ComE operon protein 4">
    <location>
        <begin position="1"/>
        <end position="273"/>
    </location>
</feature>
<feature type="sequence conflict" description="In Ref. 1; AAC36904." evidence="1" ref="1">
    <original>HP</original>
    <variation>QA</variation>
    <location>
        <begin position="153"/>
        <end position="154"/>
    </location>
</feature>
<gene>
    <name type="primary">comER</name>
    <name type="synonym">comE4</name>
    <name type="synonym">comED</name>
    <name type="ordered locus">BSU25600</name>
</gene>
<evidence type="ECO:0000305" key="1"/>
<organism>
    <name type="scientific">Bacillus subtilis (strain 168)</name>
    <dbReference type="NCBI Taxonomy" id="224308"/>
    <lineage>
        <taxon>Bacteria</taxon>
        <taxon>Bacillati</taxon>
        <taxon>Bacillota</taxon>
        <taxon>Bacilli</taxon>
        <taxon>Bacillales</taxon>
        <taxon>Bacillaceae</taxon>
        <taxon>Bacillus</taxon>
    </lineage>
</organism>
<proteinExistence type="inferred from homology"/>
<dbReference type="EMBL" id="L15202">
    <property type="protein sequence ID" value="AAC36904.1"/>
    <property type="status" value="ALT_INIT"/>
    <property type="molecule type" value="Unassigned_DNA"/>
</dbReference>
<dbReference type="EMBL" id="D84432">
    <property type="protein sequence ID" value="BAA12451.1"/>
    <property type="molecule type" value="Genomic_DNA"/>
</dbReference>
<dbReference type="EMBL" id="AL009126">
    <property type="protein sequence ID" value="CAB14502.1"/>
    <property type="molecule type" value="Genomic_DNA"/>
</dbReference>
<dbReference type="PIR" id="F69602">
    <property type="entry name" value="F69602"/>
</dbReference>
<dbReference type="RefSeq" id="NP_390438.1">
    <property type="nucleotide sequence ID" value="NC_000964.3"/>
</dbReference>
<dbReference type="RefSeq" id="WP_004398597.1">
    <property type="nucleotide sequence ID" value="NZ_OZ025638.1"/>
</dbReference>
<dbReference type="SMR" id="P39696"/>
<dbReference type="FunCoup" id="P39696">
    <property type="interactions" value="11"/>
</dbReference>
<dbReference type="STRING" id="224308.BSU25600"/>
<dbReference type="PaxDb" id="224308-BSU25600"/>
<dbReference type="DNASU" id="937834"/>
<dbReference type="EnsemblBacteria" id="CAB14502">
    <property type="protein sequence ID" value="CAB14502"/>
    <property type="gene ID" value="BSU_25600"/>
</dbReference>
<dbReference type="GeneID" id="937834"/>
<dbReference type="KEGG" id="bsu:BSU25600"/>
<dbReference type="PATRIC" id="fig|224308.179.peg.2783"/>
<dbReference type="eggNOG" id="COG0345">
    <property type="taxonomic scope" value="Bacteria"/>
</dbReference>
<dbReference type="InParanoid" id="P39696"/>
<dbReference type="OrthoDB" id="9805754at2"/>
<dbReference type="PhylomeDB" id="P39696"/>
<dbReference type="BioCyc" id="BSUB:BSU25600-MONOMER"/>
<dbReference type="Proteomes" id="UP000001570">
    <property type="component" value="Chromosome"/>
</dbReference>
<dbReference type="GO" id="GO:0004735">
    <property type="term" value="F:pyrroline-5-carboxylate reductase activity"/>
    <property type="evidence" value="ECO:0000318"/>
    <property type="project" value="GO_Central"/>
</dbReference>
<dbReference type="GO" id="GO:0055129">
    <property type="term" value="P:L-proline biosynthetic process"/>
    <property type="evidence" value="ECO:0000318"/>
    <property type="project" value="GO_Central"/>
</dbReference>
<dbReference type="Gene3D" id="3.40.50.720">
    <property type="entry name" value="NAD(P)-binding Rossmann-like Domain"/>
    <property type="match status" value="1"/>
</dbReference>
<dbReference type="Gene3D" id="1.10.3730.10">
    <property type="entry name" value="ProC C-terminal domain-like"/>
    <property type="match status" value="1"/>
</dbReference>
<dbReference type="InterPro" id="IPR008927">
    <property type="entry name" value="6-PGluconate_DH-like_C_sf"/>
</dbReference>
<dbReference type="InterPro" id="IPR036291">
    <property type="entry name" value="NAD(P)-bd_dom_sf"/>
</dbReference>
<dbReference type="InterPro" id="IPR028939">
    <property type="entry name" value="P5C_Rdtase_cat_N"/>
</dbReference>
<dbReference type="InterPro" id="IPR053790">
    <property type="entry name" value="P5CR-like_CS"/>
</dbReference>
<dbReference type="InterPro" id="IPR029036">
    <property type="entry name" value="P5CR_dimer"/>
</dbReference>
<dbReference type="InterPro" id="IPR000304">
    <property type="entry name" value="Pyrroline-COOH_reductase"/>
</dbReference>
<dbReference type="NCBIfam" id="NF005814">
    <property type="entry name" value="PRK07680.1"/>
    <property type="match status" value="1"/>
</dbReference>
<dbReference type="PANTHER" id="PTHR11645:SF51">
    <property type="entry name" value="COME OPERON PROTEIN 4"/>
    <property type="match status" value="1"/>
</dbReference>
<dbReference type="PANTHER" id="PTHR11645">
    <property type="entry name" value="PYRROLINE-5-CARBOXYLATE REDUCTASE"/>
    <property type="match status" value="1"/>
</dbReference>
<dbReference type="Pfam" id="PF03807">
    <property type="entry name" value="F420_oxidored"/>
    <property type="match status" value="1"/>
</dbReference>
<dbReference type="Pfam" id="PF14748">
    <property type="entry name" value="P5CR_dimer"/>
    <property type="match status" value="1"/>
</dbReference>
<dbReference type="PIRSF" id="PIRSF000193">
    <property type="entry name" value="Pyrrol-5-carb_rd"/>
    <property type="match status" value="1"/>
</dbReference>
<dbReference type="SUPFAM" id="SSF48179">
    <property type="entry name" value="6-phosphogluconate dehydrogenase C-terminal domain-like"/>
    <property type="match status" value="1"/>
</dbReference>
<dbReference type="SUPFAM" id="SSF51735">
    <property type="entry name" value="NAD(P)-binding Rossmann-fold domains"/>
    <property type="match status" value="1"/>
</dbReference>
<dbReference type="PROSITE" id="PS00521">
    <property type="entry name" value="P5CR"/>
    <property type="match status" value="1"/>
</dbReference>
<sequence>MKIGFIGTGNMGTILIESFIESKAADPSNMTITNRTIEKALHIKNRYNSINVTESLEKLVSENEMIFICVKPLDIYPLLARALPYLRKDHILISITSPVQTEQLEQYVPCQVARVIPSITNRALAGVSLVTFGTSCGESAKAKINELMQHISHPLQIESDITRVASDIVSCGPAFMSYLIQRFIDAAVSETSVSKQDAILMCKEMLVGMGKLLETELYTLPALQEKVCVKGGVTGEGIKALESGVQDMFHRVFQNTHMKYEEDISAVKKQFHV</sequence>
<accession>P39696</accession>
<name>COMER_BACSU</name>
<protein>
    <recommendedName>
        <fullName>ComE operon protein 4</fullName>
    </recommendedName>
</protein>
<reference key="1">
    <citation type="journal article" date="1993" name="Mol. Microbiol.">
        <title>Characterization of comE, a late competence operon of Bacillus subtilis required for the binding and uptake of transforming DNA.</title>
        <authorList>
            <person name="Hahn J."/>
            <person name="Inamine G."/>
            <person name="Kozlov Y."/>
            <person name="Dubnau D.A."/>
        </authorList>
    </citation>
    <scope>NUCLEOTIDE SEQUENCE [GENOMIC DNA]</scope>
</reference>
<reference key="2">
    <citation type="journal article" date="1996" name="Microbiology">
        <title>Systematic sequencing of the 283 kb 210 degrees-232 degrees region of the Bacillus subtilis genome containing the skin element and many sporulation genes.</title>
        <authorList>
            <person name="Mizuno M."/>
            <person name="Masuda S."/>
            <person name="Takemaru K."/>
            <person name="Hosono S."/>
            <person name="Sato T."/>
            <person name="Takeuchi M."/>
            <person name="Kobayashi Y."/>
        </authorList>
    </citation>
    <scope>NUCLEOTIDE SEQUENCE [GENOMIC DNA]</scope>
    <source>
        <strain>168 / JH642</strain>
    </source>
</reference>
<reference key="3">
    <citation type="journal article" date="1997" name="Nature">
        <title>The complete genome sequence of the Gram-positive bacterium Bacillus subtilis.</title>
        <authorList>
            <person name="Kunst F."/>
            <person name="Ogasawara N."/>
            <person name="Moszer I."/>
            <person name="Albertini A.M."/>
            <person name="Alloni G."/>
            <person name="Azevedo V."/>
            <person name="Bertero M.G."/>
            <person name="Bessieres P."/>
            <person name="Bolotin A."/>
            <person name="Borchert S."/>
            <person name="Borriss R."/>
            <person name="Boursier L."/>
            <person name="Brans A."/>
            <person name="Braun M."/>
            <person name="Brignell S.C."/>
            <person name="Bron S."/>
            <person name="Brouillet S."/>
            <person name="Bruschi C.V."/>
            <person name="Caldwell B."/>
            <person name="Capuano V."/>
            <person name="Carter N.M."/>
            <person name="Choi S.-K."/>
            <person name="Codani J.-J."/>
            <person name="Connerton I.F."/>
            <person name="Cummings N.J."/>
            <person name="Daniel R.A."/>
            <person name="Denizot F."/>
            <person name="Devine K.M."/>
            <person name="Duesterhoeft A."/>
            <person name="Ehrlich S.D."/>
            <person name="Emmerson P.T."/>
            <person name="Entian K.-D."/>
            <person name="Errington J."/>
            <person name="Fabret C."/>
            <person name="Ferrari E."/>
            <person name="Foulger D."/>
            <person name="Fritz C."/>
            <person name="Fujita M."/>
            <person name="Fujita Y."/>
            <person name="Fuma S."/>
            <person name="Galizzi A."/>
            <person name="Galleron N."/>
            <person name="Ghim S.-Y."/>
            <person name="Glaser P."/>
            <person name="Goffeau A."/>
            <person name="Golightly E.J."/>
            <person name="Grandi G."/>
            <person name="Guiseppi G."/>
            <person name="Guy B.J."/>
            <person name="Haga K."/>
            <person name="Haiech J."/>
            <person name="Harwood C.R."/>
            <person name="Henaut A."/>
            <person name="Hilbert H."/>
            <person name="Holsappel S."/>
            <person name="Hosono S."/>
            <person name="Hullo M.-F."/>
            <person name="Itaya M."/>
            <person name="Jones L.-M."/>
            <person name="Joris B."/>
            <person name="Karamata D."/>
            <person name="Kasahara Y."/>
            <person name="Klaerr-Blanchard M."/>
            <person name="Klein C."/>
            <person name="Kobayashi Y."/>
            <person name="Koetter P."/>
            <person name="Koningstein G."/>
            <person name="Krogh S."/>
            <person name="Kumano M."/>
            <person name="Kurita K."/>
            <person name="Lapidus A."/>
            <person name="Lardinois S."/>
            <person name="Lauber J."/>
            <person name="Lazarevic V."/>
            <person name="Lee S.-M."/>
            <person name="Levine A."/>
            <person name="Liu H."/>
            <person name="Masuda S."/>
            <person name="Mauel C."/>
            <person name="Medigue C."/>
            <person name="Medina N."/>
            <person name="Mellado R.P."/>
            <person name="Mizuno M."/>
            <person name="Moestl D."/>
            <person name="Nakai S."/>
            <person name="Noback M."/>
            <person name="Noone D."/>
            <person name="O'Reilly M."/>
            <person name="Ogawa K."/>
            <person name="Ogiwara A."/>
            <person name="Oudega B."/>
            <person name="Park S.-H."/>
            <person name="Parro V."/>
            <person name="Pohl T.M."/>
            <person name="Portetelle D."/>
            <person name="Porwollik S."/>
            <person name="Prescott A.M."/>
            <person name="Presecan E."/>
            <person name="Pujic P."/>
            <person name="Purnelle B."/>
            <person name="Rapoport G."/>
            <person name="Rey M."/>
            <person name="Reynolds S."/>
            <person name="Rieger M."/>
            <person name="Rivolta C."/>
            <person name="Rocha E."/>
            <person name="Roche B."/>
            <person name="Rose M."/>
            <person name="Sadaie Y."/>
            <person name="Sato T."/>
            <person name="Scanlan E."/>
            <person name="Schleich S."/>
            <person name="Schroeter R."/>
            <person name="Scoffone F."/>
            <person name="Sekiguchi J."/>
            <person name="Sekowska A."/>
            <person name="Seror S.J."/>
            <person name="Serror P."/>
            <person name="Shin B.-S."/>
            <person name="Soldo B."/>
            <person name="Sorokin A."/>
            <person name="Tacconi E."/>
            <person name="Takagi T."/>
            <person name="Takahashi H."/>
            <person name="Takemaru K."/>
            <person name="Takeuchi M."/>
            <person name="Tamakoshi A."/>
            <person name="Tanaka T."/>
            <person name="Terpstra P."/>
            <person name="Tognoni A."/>
            <person name="Tosato V."/>
            <person name="Uchiyama S."/>
            <person name="Vandenbol M."/>
            <person name="Vannier F."/>
            <person name="Vassarotti A."/>
            <person name="Viari A."/>
            <person name="Wambutt R."/>
            <person name="Wedler E."/>
            <person name="Wedler H."/>
            <person name="Weitzenegger T."/>
            <person name="Winters P."/>
            <person name="Wipat A."/>
            <person name="Yamamoto H."/>
            <person name="Yamane K."/>
            <person name="Yasumoto K."/>
            <person name="Yata K."/>
            <person name="Yoshida K."/>
            <person name="Yoshikawa H.-F."/>
            <person name="Zumstein E."/>
            <person name="Yoshikawa H."/>
            <person name="Danchin A."/>
        </authorList>
    </citation>
    <scope>NUCLEOTIDE SEQUENCE [LARGE SCALE GENOMIC DNA]</scope>
    <source>
        <strain>168</strain>
    </source>
</reference>
<reference key="4">
    <citation type="journal article" date="2001" name="J. Bacteriol.">
        <title>Multiple genes for the last step of proline biosynthesis in Bacillus subtilis.</title>
        <authorList>
            <person name="Belitsky B.R."/>
            <person name="Brill J."/>
            <person name="Bremer E."/>
            <person name="Sonenshein A.L."/>
        </authorList>
    </citation>
    <scope>POSSIBLE FUNCTION</scope>
</reference>